<accession>F1SY70</accession>
<feature type="chain" id="PRO_0000451359" description="Cytochrome P450 monooxygenase 69">
    <location>
        <begin position="1"/>
        <end position="567"/>
    </location>
</feature>
<feature type="transmembrane region" description="Helical" evidence="2">
    <location>
        <begin position="7"/>
        <end position="24"/>
    </location>
</feature>
<feature type="binding site" description="axial binding residue" evidence="1">
    <location>
        <position position="475"/>
    </location>
    <ligand>
        <name>heme</name>
        <dbReference type="ChEBI" id="CHEBI:30413"/>
    </ligand>
    <ligandPart>
        <name>Fe</name>
        <dbReference type="ChEBI" id="CHEBI:18248"/>
    </ligandPart>
</feature>
<feature type="glycosylation site" description="N-linked (GlcNAc...) asparagine" evidence="3">
    <location>
        <position position="25"/>
    </location>
</feature>
<feature type="glycosylation site" description="N-linked (GlcNAc...) asparagine" evidence="3">
    <location>
        <position position="81"/>
    </location>
</feature>
<feature type="glycosylation site" description="N-linked (GlcNAc...) asparagine" evidence="3">
    <location>
        <position position="223"/>
    </location>
</feature>
<feature type="glycosylation site" description="N-linked (GlcNAc...) asparagine" evidence="3">
    <location>
        <position position="279"/>
    </location>
</feature>
<sequence length="567" mass="64002">MVISTNELAALTVVLLATGVLFYANSTRRAPLPPGPRGLPLLGNLFQFDVMRPYPQYLKWAQKYGPVFSVKLGGQRIIVLNSSEAADELLATRSKLYSSRESPHVGFDLVSDQQRMLFMPYGREWKIARKNVHSLLGPGPSKQMGKTQDLESRVMLHDLLCHGETSITEEFVEGPRGEVPERHWFSIVRRYTTSVVMMLVYGRRIHRIVGNPELHKVYDLMSNFTHVSQPGRYMVDALPVLRWLPDMLAPWRAEGRKMHKREMDFWGKLFSDSRTAFLNGTGLNGFVQSYLRARTEAGLEDLPGNGATEDAAGWMRDKLITYTAVTIVEAGSDTTSTGVFSFVLLMLSNPDALQRAKEEMDAVVGSSRMPDWEDEDRLPWLTACIKETLRRAPPAPLGIPHKVDEDDVYNGYLIPKGSTVIGNIWAIHMDPVRYPDPTAFKPERFYNPDGKLNWASGPDAHNRDHYIFGWGRRFCSGKYLAEASMFIVLSRLIWGFDFYAASDPQTGKARLPDVSDVDTFTDGLVTAPKIYPVGFKPRSEKHAEMIKASYRDVQNDWQSMGLAGDER</sequence>
<evidence type="ECO:0000250" key="1">
    <source>
        <dbReference type="UniProtKB" id="P04798"/>
    </source>
</evidence>
<evidence type="ECO:0000255" key="2"/>
<evidence type="ECO:0000255" key="3">
    <source>
        <dbReference type="PROSITE-ProRule" id="PRU00498"/>
    </source>
</evidence>
<evidence type="ECO:0000269" key="4">
    <source>
    </source>
</evidence>
<evidence type="ECO:0000303" key="5">
    <source>
    </source>
</evidence>
<evidence type="ECO:0000305" key="6"/>
<protein>
    <recommendedName>
        <fullName evidence="5">Cytochrome P450 monooxygenase 69</fullName>
        <ecNumber evidence="4">1.-.-.-</ecNumber>
    </recommendedName>
</protein>
<proteinExistence type="evidence at protein level"/>
<keyword id="KW-0325">Glycoprotein</keyword>
<keyword id="KW-0349">Heme</keyword>
<keyword id="KW-0408">Iron</keyword>
<keyword id="KW-0472">Membrane</keyword>
<keyword id="KW-0479">Metal-binding</keyword>
<keyword id="KW-0503">Monooxygenase</keyword>
<keyword id="KW-0560">Oxidoreductase</keyword>
<keyword id="KW-0812">Transmembrane</keyword>
<keyword id="KW-1133">Transmembrane helix</keyword>
<reference key="1">
    <citation type="journal article" date="2012" name="Arch. Microbiol.">
        <title>Molecular identification and functional characterization of cytochrome P450 monooxygenases from the brown-rot basidiomycete Postia placenta.</title>
        <authorList>
            <person name="Ide M."/>
            <person name="Ichinose H."/>
            <person name="Wariishi H."/>
        </authorList>
    </citation>
    <scope>NUCLEOTIDE SEQUENCE [MRNA]</scope>
    <scope>IDENTIFICATION</scope>
    <scope>FUNCTION</scope>
    <scope>CATALYTIC ACTIVITY</scope>
    <source>
        <strain>ATCC 44394 / Madison 698-R</strain>
    </source>
</reference>
<dbReference type="EC" id="1.-.-.-" evidence="4"/>
<dbReference type="EMBL" id="AB573281">
    <property type="protein sequence ID" value="BAK09414.1"/>
    <property type="molecule type" value="mRNA"/>
</dbReference>
<dbReference type="SMR" id="F1SY70"/>
<dbReference type="GlyCosmos" id="F1SY70">
    <property type="glycosylation" value="4 sites, No reported glycans"/>
</dbReference>
<dbReference type="GO" id="GO:0016020">
    <property type="term" value="C:membrane"/>
    <property type="evidence" value="ECO:0007669"/>
    <property type="project" value="UniProtKB-SubCell"/>
</dbReference>
<dbReference type="GO" id="GO:0020037">
    <property type="term" value="F:heme binding"/>
    <property type="evidence" value="ECO:0007669"/>
    <property type="project" value="InterPro"/>
</dbReference>
<dbReference type="GO" id="GO:0005506">
    <property type="term" value="F:iron ion binding"/>
    <property type="evidence" value="ECO:0007669"/>
    <property type="project" value="InterPro"/>
</dbReference>
<dbReference type="GO" id="GO:0004497">
    <property type="term" value="F:monooxygenase activity"/>
    <property type="evidence" value="ECO:0007669"/>
    <property type="project" value="UniProtKB-KW"/>
</dbReference>
<dbReference type="GO" id="GO:0016705">
    <property type="term" value="F:oxidoreductase activity, acting on paired donors, with incorporation or reduction of molecular oxygen"/>
    <property type="evidence" value="ECO:0007669"/>
    <property type="project" value="InterPro"/>
</dbReference>
<dbReference type="CDD" id="cd11065">
    <property type="entry name" value="CYP64-like"/>
    <property type="match status" value="1"/>
</dbReference>
<dbReference type="Gene3D" id="1.10.630.10">
    <property type="entry name" value="Cytochrome P450"/>
    <property type="match status" value="1"/>
</dbReference>
<dbReference type="InterPro" id="IPR001128">
    <property type="entry name" value="Cyt_P450"/>
</dbReference>
<dbReference type="InterPro" id="IPR002401">
    <property type="entry name" value="Cyt_P450_E_grp-I"/>
</dbReference>
<dbReference type="InterPro" id="IPR036396">
    <property type="entry name" value="Cyt_P450_sf"/>
</dbReference>
<dbReference type="InterPro" id="IPR050364">
    <property type="entry name" value="Cytochrome_P450_fung"/>
</dbReference>
<dbReference type="PANTHER" id="PTHR46300:SF2">
    <property type="entry name" value="CYTOCHROME P450 MONOOXYGENASE ALNH-RELATED"/>
    <property type="match status" value="1"/>
</dbReference>
<dbReference type="PANTHER" id="PTHR46300">
    <property type="entry name" value="P450, PUTATIVE (EUROFUNG)-RELATED-RELATED"/>
    <property type="match status" value="1"/>
</dbReference>
<dbReference type="Pfam" id="PF00067">
    <property type="entry name" value="p450"/>
    <property type="match status" value="1"/>
</dbReference>
<dbReference type="PRINTS" id="PR00463">
    <property type="entry name" value="EP450I"/>
</dbReference>
<dbReference type="PRINTS" id="PR00385">
    <property type="entry name" value="P450"/>
</dbReference>
<dbReference type="SUPFAM" id="SSF48264">
    <property type="entry name" value="Cytochrome P450"/>
    <property type="match status" value="1"/>
</dbReference>
<organism>
    <name type="scientific">Postia placenta (strain ATCC 44394 / Madison 698-R)</name>
    <name type="common">Brown rot fungus</name>
    <name type="synonym">Poria monticola</name>
    <dbReference type="NCBI Taxonomy" id="561896"/>
    <lineage>
        <taxon>Eukaryota</taxon>
        <taxon>Fungi</taxon>
        <taxon>Dikarya</taxon>
        <taxon>Basidiomycota</taxon>
        <taxon>Agaricomycotina</taxon>
        <taxon>Agaricomycetes</taxon>
        <taxon>Polyporales</taxon>
        <taxon>Adustoporiaceae</taxon>
        <taxon>Rhodonia</taxon>
    </lineage>
</organism>
<comment type="function">
    <text evidence="4">Cytochrome P450 monooxygenase that is able to use 4-ethoxybenzoic acid as a substrate for oxidation.</text>
</comment>
<comment type="cofactor">
    <cofactor evidence="1">
        <name>heme</name>
        <dbReference type="ChEBI" id="CHEBI:30413"/>
    </cofactor>
</comment>
<comment type="pathway">
    <text evidence="6">Secondary metabolite biosynthesis.</text>
</comment>
<comment type="subcellular location">
    <subcellularLocation>
        <location evidence="2">Membrane</location>
        <topology evidence="2">Single-pass membrane protein</topology>
    </subcellularLocation>
</comment>
<comment type="similarity">
    <text evidence="6">Belongs to the cytochrome P450 family.</text>
</comment>
<name>CY069_POSPM</name>
<gene>
    <name evidence="5" type="primary">CYP069</name>
    <name evidence="5" type="synonym">CYP5027B6v2</name>
</gene>